<evidence type="ECO:0000255" key="1">
    <source>
        <dbReference type="HAMAP-Rule" id="MF_00444"/>
    </source>
</evidence>
<keyword id="KW-0963">Cytoplasm</keyword>
<keyword id="KW-0378">Hydrolase</keyword>
<keyword id="KW-0645">Protease</keyword>
<keyword id="KW-0720">Serine protease</keyword>
<organism>
    <name type="scientific">Bacillus cereus (strain ZK / E33L)</name>
    <dbReference type="NCBI Taxonomy" id="288681"/>
    <lineage>
        <taxon>Bacteria</taxon>
        <taxon>Bacillati</taxon>
        <taxon>Bacillota</taxon>
        <taxon>Bacilli</taxon>
        <taxon>Bacillales</taxon>
        <taxon>Bacillaceae</taxon>
        <taxon>Bacillus</taxon>
        <taxon>Bacillus cereus group</taxon>
    </lineage>
</organism>
<dbReference type="EC" id="3.4.21.92" evidence="1"/>
<dbReference type="EMBL" id="CP000001">
    <property type="protein sequence ID" value="AAU15433.1"/>
    <property type="molecule type" value="Genomic_DNA"/>
</dbReference>
<dbReference type="SMR" id="Q631K2"/>
<dbReference type="MEROPS" id="S14.001"/>
<dbReference type="KEGG" id="bcz:BCE33L4844"/>
<dbReference type="PATRIC" id="fig|288681.22.peg.509"/>
<dbReference type="Proteomes" id="UP000002612">
    <property type="component" value="Chromosome"/>
</dbReference>
<dbReference type="GO" id="GO:0005737">
    <property type="term" value="C:cytoplasm"/>
    <property type="evidence" value="ECO:0007669"/>
    <property type="project" value="UniProtKB-SubCell"/>
</dbReference>
<dbReference type="GO" id="GO:0009368">
    <property type="term" value="C:endopeptidase Clp complex"/>
    <property type="evidence" value="ECO:0007669"/>
    <property type="project" value="TreeGrafter"/>
</dbReference>
<dbReference type="GO" id="GO:0004176">
    <property type="term" value="F:ATP-dependent peptidase activity"/>
    <property type="evidence" value="ECO:0007669"/>
    <property type="project" value="InterPro"/>
</dbReference>
<dbReference type="GO" id="GO:0051117">
    <property type="term" value="F:ATPase binding"/>
    <property type="evidence" value="ECO:0007669"/>
    <property type="project" value="TreeGrafter"/>
</dbReference>
<dbReference type="GO" id="GO:0004252">
    <property type="term" value="F:serine-type endopeptidase activity"/>
    <property type="evidence" value="ECO:0007669"/>
    <property type="project" value="UniProtKB-UniRule"/>
</dbReference>
<dbReference type="GO" id="GO:0006515">
    <property type="term" value="P:protein quality control for misfolded or incompletely synthesized proteins"/>
    <property type="evidence" value="ECO:0007669"/>
    <property type="project" value="TreeGrafter"/>
</dbReference>
<dbReference type="CDD" id="cd07017">
    <property type="entry name" value="S14_ClpP_2"/>
    <property type="match status" value="1"/>
</dbReference>
<dbReference type="FunFam" id="3.90.226.10:FF:000001">
    <property type="entry name" value="ATP-dependent Clp protease proteolytic subunit"/>
    <property type="match status" value="1"/>
</dbReference>
<dbReference type="Gene3D" id="3.90.226.10">
    <property type="entry name" value="2-enoyl-CoA Hydratase, Chain A, domain 1"/>
    <property type="match status" value="1"/>
</dbReference>
<dbReference type="HAMAP" id="MF_00444">
    <property type="entry name" value="ClpP"/>
    <property type="match status" value="1"/>
</dbReference>
<dbReference type="InterPro" id="IPR001907">
    <property type="entry name" value="ClpP"/>
</dbReference>
<dbReference type="InterPro" id="IPR029045">
    <property type="entry name" value="ClpP/crotonase-like_dom_sf"/>
</dbReference>
<dbReference type="InterPro" id="IPR023562">
    <property type="entry name" value="ClpP/TepA"/>
</dbReference>
<dbReference type="InterPro" id="IPR033135">
    <property type="entry name" value="ClpP_His_AS"/>
</dbReference>
<dbReference type="InterPro" id="IPR018215">
    <property type="entry name" value="ClpP_Ser_AS"/>
</dbReference>
<dbReference type="NCBIfam" id="TIGR00493">
    <property type="entry name" value="clpP"/>
    <property type="match status" value="1"/>
</dbReference>
<dbReference type="NCBIfam" id="NF001368">
    <property type="entry name" value="PRK00277.1"/>
    <property type="match status" value="1"/>
</dbReference>
<dbReference type="NCBIfam" id="NF009205">
    <property type="entry name" value="PRK12553.1"/>
    <property type="match status" value="1"/>
</dbReference>
<dbReference type="PANTHER" id="PTHR10381">
    <property type="entry name" value="ATP-DEPENDENT CLP PROTEASE PROTEOLYTIC SUBUNIT"/>
    <property type="match status" value="1"/>
</dbReference>
<dbReference type="PANTHER" id="PTHR10381:SF70">
    <property type="entry name" value="ATP-DEPENDENT CLP PROTEASE PROTEOLYTIC SUBUNIT"/>
    <property type="match status" value="1"/>
</dbReference>
<dbReference type="Pfam" id="PF00574">
    <property type="entry name" value="CLP_protease"/>
    <property type="match status" value="1"/>
</dbReference>
<dbReference type="PRINTS" id="PR00127">
    <property type="entry name" value="CLPPROTEASEP"/>
</dbReference>
<dbReference type="SUPFAM" id="SSF52096">
    <property type="entry name" value="ClpP/crotonase"/>
    <property type="match status" value="1"/>
</dbReference>
<dbReference type="PROSITE" id="PS00382">
    <property type="entry name" value="CLP_PROTEASE_HIS"/>
    <property type="match status" value="1"/>
</dbReference>
<dbReference type="PROSITE" id="PS00381">
    <property type="entry name" value="CLP_PROTEASE_SER"/>
    <property type="match status" value="1"/>
</dbReference>
<comment type="function">
    <text evidence="1">Cleaves peptides in various proteins in a process that requires ATP hydrolysis. Has a chymotrypsin-like activity. Plays a major role in the degradation of misfolded proteins.</text>
</comment>
<comment type="catalytic activity">
    <reaction evidence="1">
        <text>Hydrolysis of proteins to small peptides in the presence of ATP and magnesium. alpha-casein is the usual test substrate. In the absence of ATP, only oligopeptides shorter than five residues are hydrolyzed (such as succinyl-Leu-Tyr-|-NHMec, and Leu-Tyr-Leu-|-Tyr-Trp, in which cleavage of the -Tyr-|-Leu- and -Tyr-|-Trp bonds also occurs).</text>
        <dbReference type="EC" id="3.4.21.92"/>
    </reaction>
</comment>
<comment type="subunit">
    <text evidence="1">Fourteen ClpP subunits assemble into 2 heptameric rings which stack back to back to give a disk-like structure with a central cavity, resembling the structure of eukaryotic proteasomes.</text>
</comment>
<comment type="subcellular location">
    <subcellularLocation>
        <location evidence="1">Cytoplasm</location>
    </subcellularLocation>
</comment>
<comment type="similarity">
    <text evidence="1">Belongs to the peptidase S14 family.</text>
</comment>
<feature type="chain" id="PRO_0000179491" description="ATP-dependent Clp protease proteolytic subunit 2">
    <location>
        <begin position="1"/>
        <end position="193"/>
    </location>
</feature>
<feature type="active site" description="Nucleophile" evidence="1">
    <location>
        <position position="98"/>
    </location>
</feature>
<feature type="active site" evidence="1">
    <location>
        <position position="123"/>
    </location>
</feature>
<accession>Q631K2</accession>
<sequence>MNLIPTVIEQTNRGERAYDIYSRLLKDRIIMLGSAIDDNVANSIVSQLLFLESQDPEKDIHIYINSPGGSITAGMAIYDTMQFIKPQVSTICIGMAASMGAFLLAAGEKGKRYALPNSEVMIHQPLGGAQGQATEIEIAAKRILFLREKLNQILADRTGQPLEVLQRDTDRDNFMTAEKALEYGLIDKIFTNR</sequence>
<gene>
    <name evidence="1" type="primary">clpP2</name>
    <name type="ordered locus">BCE33L4844</name>
</gene>
<name>CLPP2_BACCZ</name>
<protein>
    <recommendedName>
        <fullName evidence="1">ATP-dependent Clp protease proteolytic subunit 2</fullName>
        <ecNumber evidence="1">3.4.21.92</ecNumber>
    </recommendedName>
    <alternativeName>
        <fullName evidence="1">Endopeptidase Clp 2</fullName>
    </alternativeName>
</protein>
<reference key="1">
    <citation type="journal article" date="2006" name="J. Bacteriol.">
        <title>Pathogenomic sequence analysis of Bacillus cereus and Bacillus thuringiensis isolates closely related to Bacillus anthracis.</title>
        <authorList>
            <person name="Han C.S."/>
            <person name="Xie G."/>
            <person name="Challacombe J.F."/>
            <person name="Altherr M.R."/>
            <person name="Bhotika S.S."/>
            <person name="Bruce D."/>
            <person name="Campbell C.S."/>
            <person name="Campbell M.L."/>
            <person name="Chen J."/>
            <person name="Chertkov O."/>
            <person name="Cleland C."/>
            <person name="Dimitrijevic M."/>
            <person name="Doggett N.A."/>
            <person name="Fawcett J.J."/>
            <person name="Glavina T."/>
            <person name="Goodwin L.A."/>
            <person name="Hill K.K."/>
            <person name="Hitchcock P."/>
            <person name="Jackson P.J."/>
            <person name="Keim P."/>
            <person name="Kewalramani A.R."/>
            <person name="Longmire J."/>
            <person name="Lucas S."/>
            <person name="Malfatti S."/>
            <person name="McMurry K."/>
            <person name="Meincke L.J."/>
            <person name="Misra M."/>
            <person name="Moseman B.L."/>
            <person name="Mundt M."/>
            <person name="Munk A.C."/>
            <person name="Okinaka R.T."/>
            <person name="Parson-Quintana B."/>
            <person name="Reilly L.P."/>
            <person name="Richardson P."/>
            <person name="Robinson D.L."/>
            <person name="Rubin E."/>
            <person name="Saunders E."/>
            <person name="Tapia R."/>
            <person name="Tesmer J.G."/>
            <person name="Thayer N."/>
            <person name="Thompson L.S."/>
            <person name="Tice H."/>
            <person name="Ticknor L.O."/>
            <person name="Wills P.L."/>
            <person name="Brettin T.S."/>
            <person name="Gilna P."/>
        </authorList>
    </citation>
    <scope>NUCLEOTIDE SEQUENCE [LARGE SCALE GENOMIC DNA]</scope>
    <source>
        <strain>ZK / E33L</strain>
    </source>
</reference>
<proteinExistence type="inferred from homology"/>